<proteinExistence type="inferred from homology"/>
<accession>Q3KEY0</accession>
<reference key="1">
    <citation type="journal article" date="2009" name="Genome Biol.">
        <title>Genomic and genetic analyses of diversity and plant interactions of Pseudomonas fluorescens.</title>
        <authorList>
            <person name="Silby M.W."/>
            <person name="Cerdeno-Tarraga A.M."/>
            <person name="Vernikos G.S."/>
            <person name="Giddens S.R."/>
            <person name="Jackson R.W."/>
            <person name="Preston G.M."/>
            <person name="Zhang X.-X."/>
            <person name="Moon C.D."/>
            <person name="Gehrig S.M."/>
            <person name="Godfrey S.A.C."/>
            <person name="Knight C.G."/>
            <person name="Malone J.G."/>
            <person name="Robinson Z."/>
            <person name="Spiers A.J."/>
            <person name="Harris S."/>
            <person name="Challis G.L."/>
            <person name="Yaxley A.M."/>
            <person name="Harris D."/>
            <person name="Seeger K."/>
            <person name="Murphy L."/>
            <person name="Rutter S."/>
            <person name="Squares R."/>
            <person name="Quail M.A."/>
            <person name="Saunders E."/>
            <person name="Mavromatis K."/>
            <person name="Brettin T.S."/>
            <person name="Bentley S.D."/>
            <person name="Hothersall J."/>
            <person name="Stephens E."/>
            <person name="Thomas C.M."/>
            <person name="Parkhill J."/>
            <person name="Levy S.B."/>
            <person name="Rainey P.B."/>
            <person name="Thomson N.R."/>
        </authorList>
    </citation>
    <scope>NUCLEOTIDE SEQUENCE [LARGE SCALE GENOMIC DNA]</scope>
    <source>
        <strain>Pf0-1</strain>
    </source>
</reference>
<name>RL35_PSEPF</name>
<protein>
    <recommendedName>
        <fullName evidence="1">Large ribosomal subunit protein bL35</fullName>
    </recommendedName>
    <alternativeName>
        <fullName evidence="2">50S ribosomal protein L35</fullName>
    </alternativeName>
</protein>
<keyword id="KW-0687">Ribonucleoprotein</keyword>
<keyword id="KW-0689">Ribosomal protein</keyword>
<comment type="similarity">
    <text evidence="1">Belongs to the bacterial ribosomal protein bL35 family.</text>
</comment>
<evidence type="ECO:0000255" key="1">
    <source>
        <dbReference type="HAMAP-Rule" id="MF_00514"/>
    </source>
</evidence>
<evidence type="ECO:0000305" key="2"/>
<dbReference type="EMBL" id="CP000094">
    <property type="protein sequence ID" value="ABA73676.1"/>
    <property type="molecule type" value="Genomic_DNA"/>
</dbReference>
<dbReference type="RefSeq" id="WP_002553160.1">
    <property type="nucleotide sequence ID" value="NC_007492.2"/>
</dbReference>
<dbReference type="SMR" id="Q3KEY0"/>
<dbReference type="GeneID" id="98112259"/>
<dbReference type="KEGG" id="pfo:Pfl01_1933"/>
<dbReference type="eggNOG" id="COG0291">
    <property type="taxonomic scope" value="Bacteria"/>
</dbReference>
<dbReference type="HOGENOM" id="CLU_169643_1_1_6"/>
<dbReference type="Proteomes" id="UP000002704">
    <property type="component" value="Chromosome"/>
</dbReference>
<dbReference type="GO" id="GO:0022625">
    <property type="term" value="C:cytosolic large ribosomal subunit"/>
    <property type="evidence" value="ECO:0007669"/>
    <property type="project" value="TreeGrafter"/>
</dbReference>
<dbReference type="GO" id="GO:0003735">
    <property type="term" value="F:structural constituent of ribosome"/>
    <property type="evidence" value="ECO:0007669"/>
    <property type="project" value="InterPro"/>
</dbReference>
<dbReference type="GO" id="GO:0006412">
    <property type="term" value="P:translation"/>
    <property type="evidence" value="ECO:0007669"/>
    <property type="project" value="UniProtKB-UniRule"/>
</dbReference>
<dbReference type="FunFam" id="4.10.410.60:FF:000001">
    <property type="entry name" value="50S ribosomal protein L35"/>
    <property type="match status" value="1"/>
</dbReference>
<dbReference type="Gene3D" id="4.10.410.60">
    <property type="match status" value="1"/>
</dbReference>
<dbReference type="HAMAP" id="MF_00514">
    <property type="entry name" value="Ribosomal_bL35"/>
    <property type="match status" value="1"/>
</dbReference>
<dbReference type="InterPro" id="IPR001706">
    <property type="entry name" value="Ribosomal_bL35"/>
</dbReference>
<dbReference type="InterPro" id="IPR021137">
    <property type="entry name" value="Ribosomal_bL35-like"/>
</dbReference>
<dbReference type="InterPro" id="IPR018265">
    <property type="entry name" value="Ribosomal_bL35_CS"/>
</dbReference>
<dbReference type="InterPro" id="IPR037229">
    <property type="entry name" value="Ribosomal_bL35_sf"/>
</dbReference>
<dbReference type="NCBIfam" id="TIGR00001">
    <property type="entry name" value="rpmI_bact"/>
    <property type="match status" value="1"/>
</dbReference>
<dbReference type="PANTHER" id="PTHR33343">
    <property type="entry name" value="54S RIBOSOMAL PROTEIN BL35M"/>
    <property type="match status" value="1"/>
</dbReference>
<dbReference type="PANTHER" id="PTHR33343:SF1">
    <property type="entry name" value="LARGE RIBOSOMAL SUBUNIT PROTEIN BL35M"/>
    <property type="match status" value="1"/>
</dbReference>
<dbReference type="Pfam" id="PF01632">
    <property type="entry name" value="Ribosomal_L35p"/>
    <property type="match status" value="1"/>
</dbReference>
<dbReference type="PRINTS" id="PR00064">
    <property type="entry name" value="RIBOSOMALL35"/>
</dbReference>
<dbReference type="SUPFAM" id="SSF143034">
    <property type="entry name" value="L35p-like"/>
    <property type="match status" value="1"/>
</dbReference>
<dbReference type="PROSITE" id="PS00936">
    <property type="entry name" value="RIBOSOMAL_L35"/>
    <property type="match status" value="1"/>
</dbReference>
<sequence length="64" mass="7368">MPKMKTKSGAAKRFLKTANGIKHKHAFKSHILTKMSTKRKRQLRGSSLLHPSDVAKVERMLRLR</sequence>
<gene>
    <name evidence="1" type="primary">rpmI</name>
    <name type="ordered locus">Pfl01_1933</name>
</gene>
<organism>
    <name type="scientific">Pseudomonas fluorescens (strain Pf0-1)</name>
    <dbReference type="NCBI Taxonomy" id="205922"/>
    <lineage>
        <taxon>Bacteria</taxon>
        <taxon>Pseudomonadati</taxon>
        <taxon>Pseudomonadota</taxon>
        <taxon>Gammaproteobacteria</taxon>
        <taxon>Pseudomonadales</taxon>
        <taxon>Pseudomonadaceae</taxon>
        <taxon>Pseudomonas</taxon>
    </lineage>
</organism>
<feature type="chain" id="PRO_0000258727" description="Large ribosomal subunit protein bL35">
    <location>
        <begin position="1"/>
        <end position="64"/>
    </location>
</feature>